<evidence type="ECO:0000255" key="1">
    <source>
        <dbReference type="HAMAP-Rule" id="MF_00005"/>
    </source>
</evidence>
<dbReference type="EC" id="6.3.4.5" evidence="1"/>
<dbReference type="EMBL" id="CP000474">
    <property type="protein sequence ID" value="ABM09919.1"/>
    <property type="molecule type" value="Genomic_DNA"/>
</dbReference>
<dbReference type="RefSeq" id="WP_011774348.1">
    <property type="nucleotide sequence ID" value="NC_008711.1"/>
</dbReference>
<dbReference type="SMR" id="A1R591"/>
<dbReference type="STRING" id="290340.AAur_1637"/>
<dbReference type="KEGG" id="aau:AAur_1637"/>
<dbReference type="eggNOG" id="COG0137">
    <property type="taxonomic scope" value="Bacteria"/>
</dbReference>
<dbReference type="HOGENOM" id="CLU_032784_4_2_11"/>
<dbReference type="OrthoDB" id="9801641at2"/>
<dbReference type="UniPathway" id="UPA00068">
    <property type="reaction ID" value="UER00113"/>
</dbReference>
<dbReference type="Proteomes" id="UP000000637">
    <property type="component" value="Chromosome"/>
</dbReference>
<dbReference type="GO" id="GO:0005737">
    <property type="term" value="C:cytoplasm"/>
    <property type="evidence" value="ECO:0007669"/>
    <property type="project" value="UniProtKB-SubCell"/>
</dbReference>
<dbReference type="GO" id="GO:0004055">
    <property type="term" value="F:argininosuccinate synthase activity"/>
    <property type="evidence" value="ECO:0007669"/>
    <property type="project" value="UniProtKB-UniRule"/>
</dbReference>
<dbReference type="GO" id="GO:0005524">
    <property type="term" value="F:ATP binding"/>
    <property type="evidence" value="ECO:0007669"/>
    <property type="project" value="UniProtKB-UniRule"/>
</dbReference>
<dbReference type="GO" id="GO:0000053">
    <property type="term" value="P:argininosuccinate metabolic process"/>
    <property type="evidence" value="ECO:0007669"/>
    <property type="project" value="TreeGrafter"/>
</dbReference>
<dbReference type="GO" id="GO:0006526">
    <property type="term" value="P:L-arginine biosynthetic process"/>
    <property type="evidence" value="ECO:0007669"/>
    <property type="project" value="UniProtKB-UniRule"/>
</dbReference>
<dbReference type="GO" id="GO:0000050">
    <property type="term" value="P:urea cycle"/>
    <property type="evidence" value="ECO:0007669"/>
    <property type="project" value="TreeGrafter"/>
</dbReference>
<dbReference type="CDD" id="cd01999">
    <property type="entry name" value="ASS"/>
    <property type="match status" value="1"/>
</dbReference>
<dbReference type="FunFam" id="3.40.50.620:FF:000038">
    <property type="entry name" value="Argininosuccinate synthase"/>
    <property type="match status" value="1"/>
</dbReference>
<dbReference type="FunFam" id="3.90.1260.10:FF:000007">
    <property type="entry name" value="Argininosuccinate synthase"/>
    <property type="match status" value="1"/>
</dbReference>
<dbReference type="Gene3D" id="3.90.1260.10">
    <property type="entry name" value="Argininosuccinate synthetase, chain A, domain 2"/>
    <property type="match status" value="1"/>
</dbReference>
<dbReference type="Gene3D" id="3.40.50.620">
    <property type="entry name" value="HUPs"/>
    <property type="match status" value="1"/>
</dbReference>
<dbReference type="Gene3D" id="1.20.5.470">
    <property type="entry name" value="Single helix bin"/>
    <property type="match status" value="1"/>
</dbReference>
<dbReference type="HAMAP" id="MF_00005">
    <property type="entry name" value="Arg_succ_synth_type1"/>
    <property type="match status" value="1"/>
</dbReference>
<dbReference type="InterPro" id="IPR048268">
    <property type="entry name" value="Arginosuc_syn_C"/>
</dbReference>
<dbReference type="InterPro" id="IPR048267">
    <property type="entry name" value="Arginosuc_syn_N"/>
</dbReference>
<dbReference type="InterPro" id="IPR001518">
    <property type="entry name" value="Arginosuc_synth"/>
</dbReference>
<dbReference type="InterPro" id="IPR018223">
    <property type="entry name" value="Arginosuc_synth_CS"/>
</dbReference>
<dbReference type="InterPro" id="IPR023434">
    <property type="entry name" value="Arginosuc_synth_type_1_subfam"/>
</dbReference>
<dbReference type="InterPro" id="IPR024074">
    <property type="entry name" value="AS_cat/multimer_dom_body"/>
</dbReference>
<dbReference type="InterPro" id="IPR014729">
    <property type="entry name" value="Rossmann-like_a/b/a_fold"/>
</dbReference>
<dbReference type="NCBIfam" id="TIGR00032">
    <property type="entry name" value="argG"/>
    <property type="match status" value="1"/>
</dbReference>
<dbReference type="NCBIfam" id="NF001770">
    <property type="entry name" value="PRK00509.1"/>
    <property type="match status" value="1"/>
</dbReference>
<dbReference type="PANTHER" id="PTHR11587">
    <property type="entry name" value="ARGININOSUCCINATE SYNTHASE"/>
    <property type="match status" value="1"/>
</dbReference>
<dbReference type="PANTHER" id="PTHR11587:SF2">
    <property type="entry name" value="ARGININOSUCCINATE SYNTHASE"/>
    <property type="match status" value="1"/>
</dbReference>
<dbReference type="Pfam" id="PF20979">
    <property type="entry name" value="Arginosuc_syn_C"/>
    <property type="match status" value="1"/>
</dbReference>
<dbReference type="Pfam" id="PF00764">
    <property type="entry name" value="Arginosuc_synth"/>
    <property type="match status" value="1"/>
</dbReference>
<dbReference type="SUPFAM" id="SSF52402">
    <property type="entry name" value="Adenine nucleotide alpha hydrolases-like"/>
    <property type="match status" value="1"/>
</dbReference>
<dbReference type="SUPFAM" id="SSF69864">
    <property type="entry name" value="Argininosuccinate synthetase, C-terminal domain"/>
    <property type="match status" value="1"/>
</dbReference>
<dbReference type="PROSITE" id="PS00564">
    <property type="entry name" value="ARGININOSUCCIN_SYN_1"/>
    <property type="match status" value="1"/>
</dbReference>
<dbReference type="PROSITE" id="PS00565">
    <property type="entry name" value="ARGININOSUCCIN_SYN_2"/>
    <property type="match status" value="1"/>
</dbReference>
<keyword id="KW-0028">Amino-acid biosynthesis</keyword>
<keyword id="KW-0055">Arginine biosynthesis</keyword>
<keyword id="KW-0067">ATP-binding</keyword>
<keyword id="KW-0963">Cytoplasm</keyword>
<keyword id="KW-0436">Ligase</keyword>
<keyword id="KW-0547">Nucleotide-binding</keyword>
<reference key="1">
    <citation type="journal article" date="2006" name="PLoS Genet.">
        <title>Secrets of soil survival revealed by the genome sequence of Arthrobacter aurescens TC1.</title>
        <authorList>
            <person name="Mongodin E.F."/>
            <person name="Shapir N."/>
            <person name="Daugherty S.C."/>
            <person name="DeBoy R.T."/>
            <person name="Emerson J.B."/>
            <person name="Shvartzbeyn A."/>
            <person name="Radune D."/>
            <person name="Vamathevan J."/>
            <person name="Riggs F."/>
            <person name="Grinberg V."/>
            <person name="Khouri H.M."/>
            <person name="Wackett L.P."/>
            <person name="Nelson K.E."/>
            <person name="Sadowsky M.J."/>
        </authorList>
    </citation>
    <scope>NUCLEOTIDE SEQUENCE [LARGE SCALE GENOMIC DNA]</scope>
    <source>
        <strain>TC1</strain>
    </source>
</reference>
<proteinExistence type="inferred from homology"/>
<comment type="catalytic activity">
    <reaction evidence="1">
        <text>L-citrulline + L-aspartate + ATP = 2-(N(omega)-L-arginino)succinate + AMP + diphosphate + H(+)</text>
        <dbReference type="Rhea" id="RHEA:10932"/>
        <dbReference type="ChEBI" id="CHEBI:15378"/>
        <dbReference type="ChEBI" id="CHEBI:29991"/>
        <dbReference type="ChEBI" id="CHEBI:30616"/>
        <dbReference type="ChEBI" id="CHEBI:33019"/>
        <dbReference type="ChEBI" id="CHEBI:57472"/>
        <dbReference type="ChEBI" id="CHEBI:57743"/>
        <dbReference type="ChEBI" id="CHEBI:456215"/>
        <dbReference type="EC" id="6.3.4.5"/>
    </reaction>
</comment>
<comment type="pathway">
    <text evidence="1">Amino-acid biosynthesis; L-arginine biosynthesis; L-arginine from L-ornithine and carbamoyl phosphate: step 2/3.</text>
</comment>
<comment type="subunit">
    <text evidence="1">Homotetramer.</text>
</comment>
<comment type="subcellular location">
    <subcellularLocation>
        <location evidence="1">Cytoplasm</location>
    </subcellularLocation>
</comment>
<comment type="similarity">
    <text evidence="1">Belongs to the argininosuccinate synthase family. Type 1 subfamily.</text>
</comment>
<feature type="chain" id="PRO_1000000379" description="Argininosuccinate synthase">
    <location>
        <begin position="1"/>
        <end position="401"/>
    </location>
</feature>
<feature type="binding site" evidence="1">
    <location>
        <begin position="8"/>
        <end position="16"/>
    </location>
    <ligand>
        <name>ATP</name>
        <dbReference type="ChEBI" id="CHEBI:30616"/>
    </ligand>
</feature>
<feature type="binding site" evidence="1">
    <location>
        <position position="87"/>
    </location>
    <ligand>
        <name>L-citrulline</name>
        <dbReference type="ChEBI" id="CHEBI:57743"/>
    </ligand>
</feature>
<feature type="binding site" evidence="1">
    <location>
        <position position="117"/>
    </location>
    <ligand>
        <name>ATP</name>
        <dbReference type="ChEBI" id="CHEBI:30616"/>
    </ligand>
</feature>
<feature type="binding site" evidence="1">
    <location>
        <position position="119"/>
    </location>
    <ligand>
        <name>L-aspartate</name>
        <dbReference type="ChEBI" id="CHEBI:29991"/>
    </ligand>
</feature>
<feature type="binding site" evidence="1">
    <location>
        <position position="123"/>
    </location>
    <ligand>
        <name>L-aspartate</name>
        <dbReference type="ChEBI" id="CHEBI:29991"/>
    </ligand>
</feature>
<feature type="binding site" evidence="1">
    <location>
        <position position="123"/>
    </location>
    <ligand>
        <name>L-citrulline</name>
        <dbReference type="ChEBI" id="CHEBI:57743"/>
    </ligand>
</feature>
<feature type="binding site" evidence="1">
    <location>
        <position position="124"/>
    </location>
    <ligand>
        <name>L-aspartate</name>
        <dbReference type="ChEBI" id="CHEBI:29991"/>
    </ligand>
</feature>
<feature type="binding site" evidence="1">
    <location>
        <position position="127"/>
    </location>
    <ligand>
        <name>L-citrulline</name>
        <dbReference type="ChEBI" id="CHEBI:57743"/>
    </ligand>
</feature>
<feature type="binding site" evidence="1">
    <location>
        <position position="175"/>
    </location>
    <ligand>
        <name>L-citrulline</name>
        <dbReference type="ChEBI" id="CHEBI:57743"/>
    </ligand>
</feature>
<feature type="binding site" evidence="1">
    <location>
        <position position="259"/>
    </location>
    <ligand>
        <name>L-citrulline</name>
        <dbReference type="ChEBI" id="CHEBI:57743"/>
    </ligand>
</feature>
<feature type="binding site" evidence="1">
    <location>
        <position position="271"/>
    </location>
    <ligand>
        <name>L-citrulline</name>
        <dbReference type="ChEBI" id="CHEBI:57743"/>
    </ligand>
</feature>
<gene>
    <name evidence="1" type="primary">argG</name>
    <name type="ordered locus">AAur_1637</name>
</gene>
<protein>
    <recommendedName>
        <fullName evidence="1">Argininosuccinate synthase</fullName>
        <ecNumber evidence="1">6.3.4.5</ecNumber>
    </recommendedName>
    <alternativeName>
        <fullName evidence="1">Citrulline--aspartate ligase</fullName>
    </alternativeName>
</protein>
<accession>A1R591</accession>
<name>ASSY_PAEAT</name>
<sequence>MTERIVLAYSGGLDTSVAIGWIGEATGAEVIAVAVDVGQGGESLETIRQRALGCGAVEAYVADARDEFANEYAMPTLKANALYQGHYPLVSAISRPVIVKHLVKAAREFGATTVAHGCTGKGNDQVRFEVGIQTLGPDLKCIAPVRDLALTRDKAIAFAEEKGLPIETTKKNPYSIDQNVWGRAVETGYLEDIWNAPTKDIYDYTATPEFPPAPDEVIISFQAGVPVAIDGVKVTPLQAIQELNRRAGAQGVGRIDVVEDRLVGIKSREIYEAPGAMALITAHKHLEDITIEREQARFKATVGQRWAELVYDGQWFSPLKRSLDAFIEDTQQYVSGDIRMVLHGGQAVVNGRRSETSLYDFDLATYDTGDTFDQSMARGFIELWGMSSKVASGRDLRVAGQ</sequence>
<organism>
    <name type="scientific">Paenarthrobacter aurescens (strain TC1)</name>
    <dbReference type="NCBI Taxonomy" id="290340"/>
    <lineage>
        <taxon>Bacteria</taxon>
        <taxon>Bacillati</taxon>
        <taxon>Actinomycetota</taxon>
        <taxon>Actinomycetes</taxon>
        <taxon>Micrococcales</taxon>
        <taxon>Micrococcaceae</taxon>
        <taxon>Paenarthrobacter</taxon>
    </lineage>
</organism>